<organism>
    <name type="scientific">Pseudotsuga menziesii</name>
    <name type="common">Douglas-fir</name>
    <name type="synonym">Abies menziesii</name>
    <dbReference type="NCBI Taxonomy" id="3357"/>
    <lineage>
        <taxon>Eukaryota</taxon>
        <taxon>Viridiplantae</taxon>
        <taxon>Streptophyta</taxon>
        <taxon>Embryophyta</taxon>
        <taxon>Tracheophyta</taxon>
        <taxon>Spermatophyta</taxon>
        <taxon>Pinopsida</taxon>
        <taxon>Pinidae</taxon>
        <taxon>Conifers I</taxon>
        <taxon>Pinales</taxon>
        <taxon>Pinaceae</taxon>
        <taxon>Pseudotsuga</taxon>
    </lineage>
</organism>
<reference key="1">
    <citation type="journal article" date="2008" name="J. Proteomics">
        <title>A proteomics approach to identify proteins differentially expressed in Douglas-fir seedlings infected by Phellinus sulphurascens.</title>
        <authorList>
            <person name="Islam M.A."/>
            <person name="Sturrock R.N."/>
            <person name="Ekramoddoullah A.K.M."/>
        </authorList>
    </citation>
    <scope>IDENTIFICATION BY MASS SPECTROMETRY</scope>
</reference>
<accession>P85912</accession>
<protein>
    <recommendedName>
        <fullName>Unknown protein 12</fullName>
    </recommendedName>
</protein>
<evidence type="ECO:0000303" key="1">
    <source>
    </source>
</evidence>
<name>UP12_PSEMZ</name>
<sequence length="8" mass="866">XLVASIPR</sequence>
<proteinExistence type="evidence at protein level"/>
<feature type="chain" id="PRO_0000347299" description="Unknown protein 12">
    <location>
        <begin position="1" status="less than"/>
        <end position="8" status="greater than"/>
    </location>
</feature>
<feature type="non-terminal residue" evidence="1">
    <location>
        <position position="1"/>
    </location>
</feature>
<feature type="non-terminal residue" evidence="1">
    <location>
        <position position="8"/>
    </location>
</feature>